<sequence>MDEDLVVALRLQEEWDVQAARRAAAREPLSLVDASWELVDPTPDLQALFLQFNDRFFWGQLEAVEVKWSVRMTLCAGICTYEGRGGMCSIRLSEPLLKLRPRKDLVETLLHEMIHAYLFVTNNDKDREGHGPEFCKHMHRINQLTGANITVYHTFHDEVDEYRRHWWRCNGPCQHKQPYYGYVKRATNRAPSAHDYWWADHQKTCGGTYIKIKEPENYAKKGRGKTKAGKQPTSAVENKDKLCRGEAQPLIPFSGKGYVLGDTSTCPSAGKLNTSHMVNDTKGLSGQDHSASGLKLDSNVEVKCEQNGLPNKKPHLVTPLPTASHQSVLSSYFPRVSVANQKAFRNVNGSPVKSGTIDGTKHSASAGAQRKVPPSRASLRNSSKVTAPASATVTSAAGTSAAISREESGSEDQFLNKRPRLEDRTALNNIKEQTQSGGDLEDSSRPTAISTPRSSGGQRRLVNCPVCQGVVLESQINEHLDRCLEGSKTNLRPRRV</sequence>
<protein>
    <recommendedName>
        <fullName evidence="7">DNA-dependent metalloprotease SPRTN</fullName>
        <ecNumber evidence="2">3.4.24.-</ecNumber>
    </recommendedName>
    <alternativeName>
        <fullName evidence="2">Protein with SprT-like domain at the N terminus</fullName>
        <shortName evidence="2">Spartan</shortName>
    </alternativeName>
</protein>
<keyword id="KW-0007">Acetylation</keyword>
<keyword id="KW-0068">Autocatalytic cleavage</keyword>
<keyword id="KW-0158">Chromosome</keyword>
<keyword id="KW-0227">DNA damage</keyword>
<keyword id="KW-0234">DNA repair</keyword>
<keyword id="KW-0378">Hydrolase</keyword>
<keyword id="KW-1017">Isopeptide bond</keyword>
<keyword id="KW-0479">Metal-binding</keyword>
<keyword id="KW-0482">Metalloprotease</keyword>
<keyword id="KW-0539">Nucleus</keyword>
<keyword id="KW-0597">Phosphoprotein</keyword>
<keyword id="KW-0645">Protease</keyword>
<keyword id="KW-1185">Reference proteome</keyword>
<keyword id="KW-0832">Ubl conjugation</keyword>
<keyword id="KW-0862">Zinc</keyword>
<keyword id="KW-0863">Zinc-finger</keyword>
<name>SPRTN_RAT</name>
<dbReference type="EC" id="3.4.24.-" evidence="2"/>
<dbReference type="EMBL" id="CH474054">
    <property type="protein sequence ID" value="EDL96747.1"/>
    <property type="molecule type" value="Genomic_DNA"/>
</dbReference>
<dbReference type="RefSeq" id="NP_001386111.1">
    <property type="nucleotide sequence ID" value="NM_001399182.1"/>
</dbReference>
<dbReference type="RefSeq" id="XP_006255870.1">
    <property type="nucleotide sequence ID" value="XM_006255808.3"/>
</dbReference>
<dbReference type="SMR" id="D3ZVU1"/>
<dbReference type="FunCoup" id="D3ZVU1">
    <property type="interactions" value="1858"/>
</dbReference>
<dbReference type="STRING" id="10116.ENSRNOP00000033080"/>
<dbReference type="GlyGen" id="D3ZVU1">
    <property type="glycosylation" value="1 site"/>
</dbReference>
<dbReference type="PhosphoSitePlus" id="D3ZVU1"/>
<dbReference type="PaxDb" id="10116-ENSRNOP00000033080"/>
<dbReference type="Ensembl" id="ENSRNOT00000083572.2">
    <property type="protein sequence ID" value="ENSRNOP00000075544.2"/>
    <property type="gene ID" value="ENSRNOG00000021330.7"/>
</dbReference>
<dbReference type="GeneID" id="292101"/>
<dbReference type="AGR" id="RGD:1559496"/>
<dbReference type="RGD" id="1559496">
    <property type="gene designation" value="Sprtn"/>
</dbReference>
<dbReference type="eggNOG" id="KOG3931">
    <property type="taxonomic scope" value="Eukaryota"/>
</dbReference>
<dbReference type="GeneTree" id="ENSGT00390000003585"/>
<dbReference type="InParanoid" id="D3ZVU1"/>
<dbReference type="OMA" id="VCQTEVL"/>
<dbReference type="TreeFam" id="TF314762"/>
<dbReference type="Reactome" id="R-RNO-110320">
    <property type="pathway name" value="Translesion Synthesis by POLH"/>
</dbReference>
<dbReference type="PRO" id="PR:D3ZVU1"/>
<dbReference type="Proteomes" id="UP000002494">
    <property type="component" value="Chromosome 19"/>
</dbReference>
<dbReference type="Proteomes" id="UP000234681">
    <property type="component" value="Chromosome 19"/>
</dbReference>
<dbReference type="GO" id="GO:0000785">
    <property type="term" value="C:chromatin"/>
    <property type="evidence" value="ECO:0000250"/>
    <property type="project" value="UniProtKB"/>
</dbReference>
<dbReference type="GO" id="GO:0016607">
    <property type="term" value="C:nuclear speck"/>
    <property type="evidence" value="ECO:0007669"/>
    <property type="project" value="Ensembl"/>
</dbReference>
<dbReference type="GO" id="GO:0005634">
    <property type="term" value="C:nucleus"/>
    <property type="evidence" value="ECO:0000250"/>
    <property type="project" value="UniProtKB"/>
</dbReference>
<dbReference type="GO" id="GO:0003690">
    <property type="term" value="F:double-stranded DNA binding"/>
    <property type="evidence" value="ECO:0000250"/>
    <property type="project" value="UniProtKB"/>
</dbReference>
<dbReference type="GO" id="GO:0070530">
    <property type="term" value="F:K63-linked polyubiquitin modification-dependent protein binding"/>
    <property type="evidence" value="ECO:0000250"/>
    <property type="project" value="UniProtKB"/>
</dbReference>
<dbReference type="GO" id="GO:0004222">
    <property type="term" value="F:metalloendopeptidase activity"/>
    <property type="evidence" value="ECO:0000250"/>
    <property type="project" value="UniProtKB"/>
</dbReference>
<dbReference type="GO" id="GO:0031593">
    <property type="term" value="F:polyubiquitin modification-dependent protein binding"/>
    <property type="evidence" value="ECO:0000318"/>
    <property type="project" value="GO_Central"/>
</dbReference>
<dbReference type="GO" id="GO:0003697">
    <property type="term" value="F:single-stranded DNA binding"/>
    <property type="evidence" value="ECO:0000250"/>
    <property type="project" value="UniProtKB"/>
</dbReference>
<dbReference type="GO" id="GO:0043130">
    <property type="term" value="F:ubiquitin binding"/>
    <property type="evidence" value="ECO:0000250"/>
    <property type="project" value="UniProtKB"/>
</dbReference>
<dbReference type="GO" id="GO:0008270">
    <property type="term" value="F:zinc ion binding"/>
    <property type="evidence" value="ECO:0007669"/>
    <property type="project" value="UniProtKB-KW"/>
</dbReference>
<dbReference type="GO" id="GO:0006974">
    <property type="term" value="P:DNA damage response"/>
    <property type="evidence" value="ECO:0000250"/>
    <property type="project" value="UniProtKB"/>
</dbReference>
<dbReference type="GO" id="GO:0036297">
    <property type="term" value="P:interstrand cross-link repair"/>
    <property type="evidence" value="ECO:0000266"/>
    <property type="project" value="RGD"/>
</dbReference>
<dbReference type="GO" id="GO:0031398">
    <property type="term" value="P:positive regulation of protein ubiquitination"/>
    <property type="evidence" value="ECO:0000250"/>
    <property type="project" value="UniProtKB"/>
</dbReference>
<dbReference type="GO" id="GO:0016540">
    <property type="term" value="P:protein autoprocessing"/>
    <property type="evidence" value="ECO:0000250"/>
    <property type="project" value="UniProtKB"/>
</dbReference>
<dbReference type="GO" id="GO:0106300">
    <property type="term" value="P:protein-DNA covalent cross-linking repair"/>
    <property type="evidence" value="ECO:0000250"/>
    <property type="project" value="UniProtKB"/>
</dbReference>
<dbReference type="GO" id="GO:0006508">
    <property type="term" value="P:proteolysis"/>
    <property type="evidence" value="ECO:0000250"/>
    <property type="project" value="UniProtKB"/>
</dbReference>
<dbReference type="GO" id="GO:0009411">
    <property type="term" value="P:response to UV"/>
    <property type="evidence" value="ECO:0000250"/>
    <property type="project" value="UniProtKB"/>
</dbReference>
<dbReference type="GO" id="GO:0019985">
    <property type="term" value="P:translesion synthesis"/>
    <property type="evidence" value="ECO:0000250"/>
    <property type="project" value="UniProtKB"/>
</dbReference>
<dbReference type="FunFam" id="3.30.160.60:FF:000331">
    <property type="entry name" value="E3 ubiquitin-protein ligase RAD18"/>
    <property type="match status" value="1"/>
</dbReference>
<dbReference type="Gene3D" id="3.30.160.60">
    <property type="entry name" value="Classic Zinc Finger"/>
    <property type="match status" value="1"/>
</dbReference>
<dbReference type="InterPro" id="IPR006642">
    <property type="entry name" value="Rad18_UBZ4"/>
</dbReference>
<dbReference type="InterPro" id="IPR044245">
    <property type="entry name" value="Spartan"/>
</dbReference>
<dbReference type="InterPro" id="IPR006640">
    <property type="entry name" value="SprT-like_domain"/>
</dbReference>
<dbReference type="InterPro" id="IPR055220">
    <property type="entry name" value="SPRTN_ZBD"/>
</dbReference>
<dbReference type="PANTHER" id="PTHR21220">
    <property type="entry name" value="DNA-DEPENDENT METALLOPROTEASE SPRTN"/>
    <property type="match status" value="1"/>
</dbReference>
<dbReference type="PANTHER" id="PTHR21220:SF0">
    <property type="entry name" value="DNA-DEPENDENT METALLOPROTEASE SPRTN"/>
    <property type="match status" value="1"/>
</dbReference>
<dbReference type="Pfam" id="PF10263">
    <property type="entry name" value="SprT-like"/>
    <property type="match status" value="1"/>
</dbReference>
<dbReference type="Pfam" id="PF22934">
    <property type="entry name" value="SPRTN_ZBD"/>
    <property type="match status" value="1"/>
</dbReference>
<dbReference type="SMART" id="SM00731">
    <property type="entry name" value="SprT"/>
    <property type="match status" value="1"/>
</dbReference>
<dbReference type="SMART" id="SM00734">
    <property type="entry name" value="ZnF_Rad18"/>
    <property type="match status" value="1"/>
</dbReference>
<dbReference type="PROSITE" id="PS51908">
    <property type="entry name" value="ZF_UBZ4"/>
    <property type="match status" value="1"/>
</dbReference>
<dbReference type="PROSITE" id="PS00142">
    <property type="entry name" value="ZINC_PROTEASE"/>
    <property type="match status" value="1"/>
</dbReference>
<comment type="function">
    <text evidence="1 2">DNA-dependent metalloendopeptidase that mediates the proteolytic cleavage of covalent DNA-protein cross-links (DPCs) during DNA synthesis, thereby playing a key role in maintaining genomic integrity. DPCs are highly toxic DNA lesions that interfere with essential chromatin transactions, such as replication and transcription, and which are induced by reactive agents, such as UV light or formaldehyde. Associates with the DNA replication machinery and specifically removes DPCs during DNA synthesis. Catalyzes proteolytic cleavage of the HMCES DNA-protein cross-link following unfolding by the BRIP1/FANCJ helicase. Acts as a pleiotropic protease for DNA-binding proteins cross-linked with DNA, such as TOP1, TOP2A, histones H3 and H4. Mediates degradation of DPCs that are not ubiquitinated, while it is not able to degrade ubiquitinated DPCs. SPRTN activation requires polymerase collision with DPCs followed by helicase bypass of DPCs. Involved in recruitment of VCP/p97 to sites of DNA damage. Also acts as an activator of CHEK1 during normal DNA replication by mediating proteolytic cleavage of CHEK1, thereby promoting CHEK1 removal from chromatin and subsequent activation. Does not activate CHEK1 in response to DNA damage. May also act as a 'reader' of ubiquitinated PCNA: recruited to sites of UV damage and interacts with ubiquitinated PCNA and RAD18, the E3 ubiquitin ligase that monoubiquitinates PCNA. Facilitates chromatin association of RAD18 and is required for efficient PCNA monoubiquitination, promoting a feed-forward loop to enhance PCNA ubiquitination and translesion DNA synthesis.</text>
</comment>
<comment type="cofactor">
    <cofactor evidence="2">
        <name>Zn(2+)</name>
        <dbReference type="ChEBI" id="CHEBI:29105"/>
    </cofactor>
</comment>
<comment type="activity regulation">
    <text evidence="2">DNA-binding activates the protease activity: single-stranded DNA-binding specifically activates ability to cleave covalent DNA-protein cross-links (DPCs). In contrast, double-stranded DNA-binding specifically activates autocatalytic cleavage, and subsequent inactivation.</text>
</comment>
<comment type="subunit">
    <text evidence="2">Homodimer. Interacts (VIA PIP-box) with PCNA (when ubiquitinated). Interacts (via its SHP-box) with VCP/p97. Interacts with RAD18. Interacts with KCTD13 and POLD3.</text>
</comment>
<comment type="subcellular location">
    <subcellularLocation>
        <location evidence="2">Nucleus</location>
    </subcellularLocation>
    <subcellularLocation>
        <location evidence="2">Chromosome</location>
    </subcellularLocation>
    <text evidence="2">Localizes to sites of UV damage via the PIP-box. Recruited to stalled replication forks at sites of replication stress following deubiquitination. CHEK1 stimulates recruitment to chromatin.</text>
</comment>
<comment type="domain">
    <text evidence="2">The PIP-box mediates the interaction with PCNA, while the UBZ4-type zinc finger mediates binding to 'Lys-48'- and 'Lys-63'-linked polyubiquitin.</text>
</comment>
<comment type="PTM">
    <text evidence="2">Autocatalytically cleaved in response to double-stranded DNA-binding: autocatalytic cleavage takes place in trans and leads to inactivation.</text>
</comment>
<comment type="PTM">
    <text evidence="2">Monoubiquitinated; monoubiquitination promotes exclusion from chromatin. Deubiquitinated by VCPIP1: deubiquitination is required for subsequent acetylation and recruitment to chromatin and DNA damage sites.</text>
</comment>
<comment type="PTM">
    <text evidence="2">Acetylated following deubiquitination by VCPIP1, leading to recruitment to chromatin and DNA damage sites.</text>
</comment>
<comment type="PTM">
    <text evidence="2">Phosphorylation by CHEK1 promotes recruitment to chromatin.</text>
</comment>
<comment type="similarity">
    <text evidence="7">Belongs to the Spartan family.</text>
</comment>
<reference key="1">
    <citation type="journal article" date="2004" name="Nature">
        <title>Genome sequence of the Brown Norway rat yields insights into mammalian evolution.</title>
        <authorList>
            <person name="Gibbs R.A."/>
            <person name="Weinstock G.M."/>
            <person name="Metzker M.L."/>
            <person name="Muzny D.M."/>
            <person name="Sodergren E.J."/>
            <person name="Scherer S."/>
            <person name="Scott G."/>
            <person name="Steffen D."/>
            <person name="Worley K.C."/>
            <person name="Burch P.E."/>
            <person name="Okwuonu G."/>
            <person name="Hines S."/>
            <person name="Lewis L."/>
            <person name="Deramo C."/>
            <person name="Delgado O."/>
            <person name="Dugan-Rocha S."/>
            <person name="Miner G."/>
            <person name="Morgan M."/>
            <person name="Hawes A."/>
            <person name="Gill R."/>
            <person name="Holt R.A."/>
            <person name="Adams M.D."/>
            <person name="Amanatides P.G."/>
            <person name="Baden-Tillson H."/>
            <person name="Barnstead M."/>
            <person name="Chin S."/>
            <person name="Evans C.A."/>
            <person name="Ferriera S."/>
            <person name="Fosler C."/>
            <person name="Glodek A."/>
            <person name="Gu Z."/>
            <person name="Jennings D."/>
            <person name="Kraft C.L."/>
            <person name="Nguyen T."/>
            <person name="Pfannkoch C.M."/>
            <person name="Sitter C."/>
            <person name="Sutton G.G."/>
            <person name="Venter J.C."/>
            <person name="Woodage T."/>
            <person name="Smith D."/>
            <person name="Lee H.-M."/>
            <person name="Gustafson E."/>
            <person name="Cahill P."/>
            <person name="Kana A."/>
            <person name="Doucette-Stamm L."/>
            <person name="Weinstock K."/>
            <person name="Fechtel K."/>
            <person name="Weiss R.B."/>
            <person name="Dunn D.M."/>
            <person name="Green E.D."/>
            <person name="Blakesley R.W."/>
            <person name="Bouffard G.G."/>
            <person name="De Jong P.J."/>
            <person name="Osoegawa K."/>
            <person name="Zhu B."/>
            <person name="Marra M."/>
            <person name="Schein J."/>
            <person name="Bosdet I."/>
            <person name="Fjell C."/>
            <person name="Jones S."/>
            <person name="Krzywinski M."/>
            <person name="Mathewson C."/>
            <person name="Siddiqui A."/>
            <person name="Wye N."/>
            <person name="McPherson J."/>
            <person name="Zhao S."/>
            <person name="Fraser C.M."/>
            <person name="Shetty J."/>
            <person name="Shatsman S."/>
            <person name="Geer K."/>
            <person name="Chen Y."/>
            <person name="Abramzon S."/>
            <person name="Nierman W.C."/>
            <person name="Havlak P.H."/>
            <person name="Chen R."/>
            <person name="Durbin K.J."/>
            <person name="Egan A."/>
            <person name="Ren Y."/>
            <person name="Song X.-Z."/>
            <person name="Li B."/>
            <person name="Liu Y."/>
            <person name="Qin X."/>
            <person name="Cawley S."/>
            <person name="Cooney A.J."/>
            <person name="D'Souza L.M."/>
            <person name="Martin K."/>
            <person name="Wu J.Q."/>
            <person name="Gonzalez-Garay M.L."/>
            <person name="Jackson A.R."/>
            <person name="Kalafus K.J."/>
            <person name="McLeod M.P."/>
            <person name="Milosavljevic A."/>
            <person name="Virk D."/>
            <person name="Volkov A."/>
            <person name="Wheeler D.A."/>
            <person name="Zhang Z."/>
            <person name="Bailey J.A."/>
            <person name="Eichler E.E."/>
            <person name="Tuzun E."/>
            <person name="Birney E."/>
            <person name="Mongin E."/>
            <person name="Ureta-Vidal A."/>
            <person name="Woodwark C."/>
            <person name="Zdobnov E."/>
            <person name="Bork P."/>
            <person name="Suyama M."/>
            <person name="Torrents D."/>
            <person name="Alexandersson M."/>
            <person name="Trask B.J."/>
            <person name="Young J.M."/>
            <person name="Huang H."/>
            <person name="Wang H."/>
            <person name="Xing H."/>
            <person name="Daniels S."/>
            <person name="Gietzen D."/>
            <person name="Schmidt J."/>
            <person name="Stevens K."/>
            <person name="Vitt U."/>
            <person name="Wingrove J."/>
            <person name="Camara F."/>
            <person name="Mar Alba M."/>
            <person name="Abril J.F."/>
            <person name="Guigo R."/>
            <person name="Smit A."/>
            <person name="Dubchak I."/>
            <person name="Rubin E.M."/>
            <person name="Couronne O."/>
            <person name="Poliakov A."/>
            <person name="Huebner N."/>
            <person name="Ganten D."/>
            <person name="Goesele C."/>
            <person name="Hummel O."/>
            <person name="Kreitler T."/>
            <person name="Lee Y.-A."/>
            <person name="Monti J."/>
            <person name="Schulz H."/>
            <person name="Zimdahl H."/>
            <person name="Himmelbauer H."/>
            <person name="Lehrach H."/>
            <person name="Jacob H.J."/>
            <person name="Bromberg S."/>
            <person name="Gullings-Handley J."/>
            <person name="Jensen-Seaman M.I."/>
            <person name="Kwitek A.E."/>
            <person name="Lazar J."/>
            <person name="Pasko D."/>
            <person name="Tonellato P.J."/>
            <person name="Twigger S."/>
            <person name="Ponting C.P."/>
            <person name="Duarte J.M."/>
            <person name="Rice S."/>
            <person name="Goodstadt L."/>
            <person name="Beatson S.A."/>
            <person name="Emes R.D."/>
            <person name="Winter E.E."/>
            <person name="Webber C."/>
            <person name="Brandt P."/>
            <person name="Nyakatura G."/>
            <person name="Adetobi M."/>
            <person name="Chiaromonte F."/>
            <person name="Elnitski L."/>
            <person name="Eswara P."/>
            <person name="Hardison R.C."/>
            <person name="Hou M."/>
            <person name="Kolbe D."/>
            <person name="Makova K."/>
            <person name="Miller W."/>
            <person name="Nekrutenko A."/>
            <person name="Riemer C."/>
            <person name="Schwartz S."/>
            <person name="Taylor J."/>
            <person name="Yang S."/>
            <person name="Zhang Y."/>
            <person name="Lindpaintner K."/>
            <person name="Andrews T.D."/>
            <person name="Caccamo M."/>
            <person name="Clamp M."/>
            <person name="Clarke L."/>
            <person name="Curwen V."/>
            <person name="Durbin R.M."/>
            <person name="Eyras E."/>
            <person name="Searle S.M."/>
            <person name="Cooper G.M."/>
            <person name="Batzoglou S."/>
            <person name="Brudno M."/>
            <person name="Sidow A."/>
            <person name="Stone E.A."/>
            <person name="Payseur B.A."/>
            <person name="Bourque G."/>
            <person name="Lopez-Otin C."/>
            <person name="Puente X.S."/>
            <person name="Chakrabarti K."/>
            <person name="Chatterji S."/>
            <person name="Dewey C."/>
            <person name="Pachter L."/>
            <person name="Bray N."/>
            <person name="Yap V.B."/>
            <person name="Caspi A."/>
            <person name="Tesler G."/>
            <person name="Pevzner P.A."/>
            <person name="Haussler D."/>
            <person name="Roskin K.M."/>
            <person name="Baertsch R."/>
            <person name="Clawson H."/>
            <person name="Furey T.S."/>
            <person name="Hinrichs A.S."/>
            <person name="Karolchik D."/>
            <person name="Kent W.J."/>
            <person name="Rosenbloom K.R."/>
            <person name="Trumbower H."/>
            <person name="Weirauch M."/>
            <person name="Cooper D.N."/>
            <person name="Stenson P.D."/>
            <person name="Ma B."/>
            <person name="Brent M."/>
            <person name="Arumugam M."/>
            <person name="Shteynberg D."/>
            <person name="Copley R.R."/>
            <person name="Taylor M.S."/>
            <person name="Riethman H."/>
            <person name="Mudunuri U."/>
            <person name="Peterson J."/>
            <person name="Guyer M."/>
            <person name="Felsenfeld A."/>
            <person name="Old S."/>
            <person name="Mockrin S."/>
            <person name="Collins F.S."/>
        </authorList>
    </citation>
    <scope>NUCLEOTIDE SEQUENCE [LARGE SCALE GENOMIC DNA]</scope>
    <source>
        <strain>Brown Norway</strain>
    </source>
</reference>
<reference key="2">
    <citation type="submission" date="2005-07" db="EMBL/GenBank/DDBJ databases">
        <authorList>
            <person name="Mural R.J."/>
            <person name="Adams M.D."/>
            <person name="Myers E.W."/>
            <person name="Smith H.O."/>
            <person name="Venter J.C."/>
        </authorList>
    </citation>
    <scope>NUCLEOTIDE SEQUENCE [LARGE SCALE GENOMIC DNA]</scope>
    <source>
        <strain>Brown Norway</strain>
    </source>
</reference>
<accession>D3ZVU1</accession>
<evidence type="ECO:0000250" key="1">
    <source>
        <dbReference type="UniProtKB" id="A0A1L8G2K9"/>
    </source>
</evidence>
<evidence type="ECO:0000250" key="2">
    <source>
        <dbReference type="UniProtKB" id="Q9H040"/>
    </source>
</evidence>
<evidence type="ECO:0000255" key="3"/>
<evidence type="ECO:0000255" key="4">
    <source>
        <dbReference type="PROSITE-ProRule" id="PRU01256"/>
    </source>
</evidence>
<evidence type="ECO:0000255" key="5">
    <source>
        <dbReference type="PROSITE-ProRule" id="PRU10095"/>
    </source>
</evidence>
<evidence type="ECO:0000256" key="6">
    <source>
        <dbReference type="SAM" id="MobiDB-lite"/>
    </source>
</evidence>
<evidence type="ECO:0000305" key="7"/>
<evidence type="ECO:0000312" key="8">
    <source>
        <dbReference type="RGD" id="1559496"/>
    </source>
</evidence>
<organism>
    <name type="scientific">Rattus norvegicus</name>
    <name type="common">Rat</name>
    <dbReference type="NCBI Taxonomy" id="10116"/>
    <lineage>
        <taxon>Eukaryota</taxon>
        <taxon>Metazoa</taxon>
        <taxon>Chordata</taxon>
        <taxon>Craniata</taxon>
        <taxon>Vertebrata</taxon>
        <taxon>Euteleostomi</taxon>
        <taxon>Mammalia</taxon>
        <taxon>Eutheria</taxon>
        <taxon>Euarchontoglires</taxon>
        <taxon>Glires</taxon>
        <taxon>Rodentia</taxon>
        <taxon>Myomorpha</taxon>
        <taxon>Muroidea</taxon>
        <taxon>Muridae</taxon>
        <taxon>Murinae</taxon>
        <taxon>Rattus</taxon>
    </lineage>
</organism>
<proteinExistence type="inferred from homology"/>
<gene>
    <name evidence="8" type="primary">Sprtn</name>
</gene>
<feature type="chain" id="PRO_0000419485" description="DNA-dependent metalloprotease SPRTN">
    <location>
        <begin position="1"/>
        <end position="496"/>
    </location>
</feature>
<feature type="domain" description="SprT-like" evidence="3">
    <location>
        <begin position="45"/>
        <end position="212"/>
    </location>
</feature>
<feature type="zinc finger region" description="UBZ4-type" evidence="4">
    <location>
        <begin position="461"/>
        <end position="488"/>
    </location>
</feature>
<feature type="region of interest" description="Disordered" evidence="6">
    <location>
        <begin position="346"/>
        <end position="459"/>
    </location>
</feature>
<feature type="short sequence motif" description="SHP-box" evidence="2">
    <location>
        <begin position="253"/>
        <end position="261"/>
    </location>
</feature>
<feature type="short sequence motif" description="PIP-box" evidence="2">
    <location>
        <begin position="326"/>
        <end position="333"/>
    </location>
</feature>
<feature type="short sequence motif" description="Nuclear localization signal" evidence="2">
    <location>
        <begin position="412"/>
        <end position="423"/>
    </location>
</feature>
<feature type="compositionally biased region" description="Low complexity" evidence="6">
    <location>
        <begin position="382"/>
        <end position="403"/>
    </location>
</feature>
<feature type="compositionally biased region" description="Polar residues" evidence="6">
    <location>
        <begin position="426"/>
        <end position="437"/>
    </location>
</feature>
<feature type="compositionally biased region" description="Polar residues" evidence="6">
    <location>
        <begin position="445"/>
        <end position="457"/>
    </location>
</feature>
<feature type="active site" evidence="2 5">
    <location>
        <position position="112"/>
    </location>
</feature>
<feature type="binding site" evidence="2 5">
    <location>
        <position position="111"/>
    </location>
    <ligand>
        <name>Zn(2+)</name>
        <dbReference type="ChEBI" id="CHEBI:29105"/>
        <label>1</label>
        <note>catalytic</note>
    </ligand>
</feature>
<feature type="binding site" evidence="2 5">
    <location>
        <position position="115"/>
    </location>
    <ligand>
        <name>Zn(2+)</name>
        <dbReference type="ChEBI" id="CHEBI:29105"/>
        <label>1</label>
        <note>catalytic</note>
    </ligand>
</feature>
<feature type="binding site" evidence="2">
    <location>
        <position position="130"/>
    </location>
    <ligand>
        <name>Zn(2+)</name>
        <dbReference type="ChEBI" id="CHEBI:29105"/>
        <label>1</label>
        <note>catalytic</note>
    </ligand>
</feature>
<feature type="binding site" evidence="4">
    <location>
        <position position="464"/>
    </location>
    <ligand>
        <name>Zn(2+)</name>
        <dbReference type="ChEBI" id="CHEBI:29105"/>
        <label>2</label>
    </ligand>
</feature>
<feature type="binding site" evidence="4">
    <location>
        <position position="467"/>
    </location>
    <ligand>
        <name>Zn(2+)</name>
        <dbReference type="ChEBI" id="CHEBI:29105"/>
        <label>2</label>
    </ligand>
</feature>
<feature type="binding site" evidence="4">
    <location>
        <position position="479"/>
    </location>
    <ligand>
        <name>Zn(2+)</name>
        <dbReference type="ChEBI" id="CHEBI:29105"/>
        <label>2</label>
    </ligand>
</feature>
<feature type="binding site" evidence="4">
    <location>
        <position position="483"/>
    </location>
    <ligand>
        <name>Zn(2+)</name>
        <dbReference type="ChEBI" id="CHEBI:29105"/>
        <label>2</label>
    </ligand>
</feature>
<feature type="site" description="Cleavage; by autolysis" evidence="2">
    <location>
        <begin position="227"/>
        <end position="228"/>
    </location>
</feature>
<feature type="modified residue" description="N-acetylmethionine" evidence="2">
    <location>
        <position position="1"/>
    </location>
</feature>
<feature type="modified residue" description="N6-acetyllysine" evidence="2">
    <location>
        <position position="230"/>
    </location>
</feature>
<feature type="modified residue" description="Phosphoserine" evidence="2">
    <location>
        <position position="268"/>
    </location>
</feature>
<feature type="modified residue" description="Phosphoserine" evidence="2">
    <location>
        <position position="383"/>
    </location>
</feature>
<feature type="cross-link" description="Glycyl lysine isopeptide (Lys-Gly) (interchain with G-Cter in SUMO2)" evidence="2">
    <location>
        <position position="303"/>
    </location>
</feature>
<feature type="cross-link" description="Glycyl lysine isopeptide (Lys-Gly) (interchain with G-Cter in SUMO2); alternate" evidence="2">
    <location>
        <position position="342"/>
    </location>
</feature>
<feature type="cross-link" description="Glycyl lysine isopeptide (Lys-Gly) (interchain with G-Cter in ubiquitin); alternate" evidence="2">
    <location>
        <position position="342"/>
    </location>
</feature>
<feature type="cross-link" description="Glycyl lysine isopeptide (Lys-Gly) (interchain with G-Cter in SUMO2)" evidence="2">
    <location>
        <position position="361"/>
    </location>
</feature>
<feature type="cross-link" description="Glycyl lysine isopeptide (Lys-Gly) (interchain with G-Cter in SUMO2)" evidence="2">
    <location>
        <position position="431"/>
    </location>
</feature>